<name>ZNF24_PONAB</name>
<accession>Q5RAE6</accession>
<keyword id="KW-0238">DNA-binding</keyword>
<keyword id="KW-1017">Isopeptide bond</keyword>
<keyword id="KW-0479">Metal-binding</keyword>
<keyword id="KW-0539">Nucleus</keyword>
<keyword id="KW-0597">Phosphoprotein</keyword>
<keyword id="KW-1185">Reference proteome</keyword>
<keyword id="KW-0677">Repeat</keyword>
<keyword id="KW-0678">Repressor</keyword>
<keyword id="KW-0804">Transcription</keyword>
<keyword id="KW-0805">Transcription regulation</keyword>
<keyword id="KW-0832">Ubl conjugation</keyword>
<keyword id="KW-0862">Zinc</keyword>
<keyword id="KW-0863">Zinc-finger</keyword>
<evidence type="ECO:0000250" key="1"/>
<evidence type="ECO:0000250" key="2">
    <source>
        <dbReference type="UniProtKB" id="P17028"/>
    </source>
</evidence>
<evidence type="ECO:0000255" key="3">
    <source>
        <dbReference type="PROSITE-ProRule" id="PRU00042"/>
    </source>
</evidence>
<evidence type="ECO:0000255" key="4">
    <source>
        <dbReference type="PROSITE-ProRule" id="PRU00187"/>
    </source>
</evidence>
<evidence type="ECO:0000305" key="5"/>
<protein>
    <recommendedName>
        <fullName>Zinc finger protein 24</fullName>
    </recommendedName>
</protein>
<gene>
    <name type="primary">ZNF24</name>
</gene>
<sequence length="368" mass="42141">MSAQSVEEDSILIIPTPDEEEKILRVKLEEDPDGEEGSSIPWNHLPDPEIFRQRFRQFGYQDSPGPREAVSQLRELCRLWLRPETHTKEQILELVVLEQFVAILPKELQTWVRDHHPENGEEAVTVLEDLESELDDPGQPVSLRRRKREVLVEDMVSQEEAQGLPSSELDAVENQLKWASWELHSLRHCDDDGRTENGALAPKQELPSAVESHEVPGTLNMGVPQIFKYGETCFPKGRFERKRNPSRKKQHICDECGKHFSQGSALILHQRIHSGEKPYGCVECGKAFSRSSILVQHQRVHTGEKPYKCLECGKAFSQNSGLINHQRIHTGEKPYECVQCGKSYSQSSNLFRHQRRHNAEKLLNVVKV</sequence>
<organism>
    <name type="scientific">Pongo abelii</name>
    <name type="common">Sumatran orangutan</name>
    <name type="synonym">Pongo pygmaeus abelii</name>
    <dbReference type="NCBI Taxonomy" id="9601"/>
    <lineage>
        <taxon>Eukaryota</taxon>
        <taxon>Metazoa</taxon>
        <taxon>Chordata</taxon>
        <taxon>Craniata</taxon>
        <taxon>Vertebrata</taxon>
        <taxon>Euteleostomi</taxon>
        <taxon>Mammalia</taxon>
        <taxon>Eutheria</taxon>
        <taxon>Euarchontoglires</taxon>
        <taxon>Primates</taxon>
        <taxon>Haplorrhini</taxon>
        <taxon>Catarrhini</taxon>
        <taxon>Hominidae</taxon>
        <taxon>Pongo</taxon>
    </lineage>
</organism>
<feature type="chain" id="PRO_0000366921" description="Zinc finger protein 24">
    <location>
        <begin position="1"/>
        <end position="368"/>
    </location>
</feature>
<feature type="domain" description="SCAN box" evidence="4">
    <location>
        <begin position="52"/>
        <end position="134"/>
    </location>
</feature>
<feature type="zinc finger region" description="C2H2-type 1" evidence="3">
    <location>
        <begin position="251"/>
        <end position="273"/>
    </location>
</feature>
<feature type="zinc finger region" description="C2H2-type 2" evidence="3">
    <location>
        <begin position="279"/>
        <end position="301"/>
    </location>
</feature>
<feature type="zinc finger region" description="C2H2-type 3" evidence="3">
    <location>
        <begin position="307"/>
        <end position="329"/>
    </location>
</feature>
<feature type="zinc finger region" description="C2H2-type 4" evidence="3">
    <location>
        <begin position="335"/>
        <end position="357"/>
    </location>
</feature>
<feature type="region of interest" description="Necessary and sufficient for nuclear localization" evidence="1">
    <location>
        <begin position="251"/>
        <end position="301"/>
    </location>
</feature>
<feature type="modified residue" description="Phosphoserine" evidence="2">
    <location>
        <position position="132"/>
    </location>
</feature>
<feature type="modified residue" description="Phosphoserine" evidence="2">
    <location>
        <position position="142"/>
    </location>
</feature>
<feature type="modified residue" description="Phosphoserine" evidence="2">
    <location>
        <position position="274"/>
    </location>
</feature>
<feature type="modified residue" description="Phosphoserine" evidence="2">
    <location>
        <position position="292"/>
    </location>
</feature>
<feature type="modified residue" description="Phosphotyrosine" evidence="2">
    <location>
        <position position="335"/>
    </location>
</feature>
<feature type="cross-link" description="Glycyl lysine isopeptide (Lys-Gly) (interchain with G-Cter in SUMO2)" evidence="2">
    <location>
        <position position="22"/>
    </location>
</feature>
<feature type="cross-link" description="Glycyl lysine isopeptide (Lys-Gly) (interchain with G-Cter in SUMO1); alternate" evidence="2">
    <location>
        <position position="27"/>
    </location>
</feature>
<feature type="cross-link" description="Glycyl lysine isopeptide (Lys-Gly) (interchain with G-Cter in SUMO2); alternate" evidence="2">
    <location>
        <position position="27"/>
    </location>
</feature>
<feature type="cross-link" description="Glycyl lysine isopeptide (Lys-Gly) (interchain with G-Cter in SUMO2)" evidence="2">
    <location>
        <position position="147"/>
    </location>
</feature>
<feature type="cross-link" description="Glycyl lysine isopeptide (Lys-Gly) (interchain with G-Cter in SUMO2)" evidence="2">
    <location>
        <position position="177"/>
    </location>
</feature>
<feature type="cross-link" description="Glycyl lysine isopeptide (Lys-Gly) (interchain with G-Cter in SUMO2)" evidence="2">
    <location>
        <position position="236"/>
    </location>
</feature>
<feature type="cross-link" description="Glycyl lysine isopeptide (Lys-Gly) (interchain with G-Cter in SUMO2)" evidence="2">
    <location>
        <position position="277"/>
    </location>
</feature>
<feature type="cross-link" description="Glycyl lysine isopeptide (Lys-Gly) (interchain with G-Cter in SUMO2)" evidence="2">
    <location>
        <position position="286"/>
    </location>
</feature>
<feature type="cross-link" description="Glycyl lysine isopeptide (Lys-Gly) (interchain with G-Cter in SUMO2)" evidence="2">
    <location>
        <position position="361"/>
    </location>
</feature>
<feature type="cross-link" description="Glycyl lysine isopeptide (Lys-Gly) (interchain with G-Cter in SUMO2)" evidence="2">
    <location>
        <position position="367"/>
    </location>
</feature>
<comment type="function">
    <text evidence="1">Transcription factor required for myelination of differentiated oligodendrocytes. Required for the conversion of oligodendrocytes from the premyelinating to the myelinating state. In the developing central nervous system (CNS), involved in the maintenance in the progenitor stage by promoting the cell cycle. Specifically binds to the 5'-TCAT-3' DNA sequence. Has transcription repressor activity in vitro (By similarity).</text>
</comment>
<comment type="subcellular location">
    <subcellularLocation>
        <location evidence="4">Nucleus</location>
    </subcellularLocation>
</comment>
<comment type="PTM">
    <text evidence="1">Sumoylated.</text>
</comment>
<comment type="similarity">
    <text evidence="5">Belongs to the krueppel C2H2-type zinc-finger protein family.</text>
</comment>
<dbReference type="EMBL" id="CR859071">
    <property type="protein sequence ID" value="CAH91264.1"/>
    <property type="molecule type" value="mRNA"/>
</dbReference>
<dbReference type="RefSeq" id="NP_001125749.1">
    <property type="nucleotide sequence ID" value="NM_001132277.1"/>
</dbReference>
<dbReference type="SMR" id="Q5RAE6"/>
<dbReference type="FunCoup" id="Q5RAE6">
    <property type="interactions" value="2495"/>
</dbReference>
<dbReference type="STRING" id="9601.ENSPPYP00000010225"/>
<dbReference type="Ensembl" id="ENSPPYT00000010630.3">
    <property type="protein sequence ID" value="ENSPPYP00000010225.3"/>
    <property type="gene ID" value="ENSPPYG00000009106.3"/>
</dbReference>
<dbReference type="GeneID" id="100172674"/>
<dbReference type="KEGG" id="pon:100172674"/>
<dbReference type="CTD" id="7572"/>
<dbReference type="eggNOG" id="KOG1721">
    <property type="taxonomic scope" value="Eukaryota"/>
</dbReference>
<dbReference type="GeneTree" id="ENSGT00940000161396"/>
<dbReference type="HOGENOM" id="CLU_002678_49_3_1"/>
<dbReference type="InParanoid" id="Q5RAE6"/>
<dbReference type="OMA" id="VAQIFKY"/>
<dbReference type="OrthoDB" id="427030at2759"/>
<dbReference type="Proteomes" id="UP000001595">
    <property type="component" value="Chromosome 18"/>
</dbReference>
<dbReference type="GO" id="GO:0005654">
    <property type="term" value="C:nucleoplasm"/>
    <property type="evidence" value="ECO:0007669"/>
    <property type="project" value="Ensembl"/>
</dbReference>
<dbReference type="GO" id="GO:0005634">
    <property type="term" value="C:nucleus"/>
    <property type="evidence" value="ECO:0000250"/>
    <property type="project" value="UniProtKB"/>
</dbReference>
<dbReference type="GO" id="GO:0001228">
    <property type="term" value="F:DNA-binding transcription activator activity, RNA polymerase II-specific"/>
    <property type="evidence" value="ECO:0007669"/>
    <property type="project" value="Ensembl"/>
</dbReference>
<dbReference type="GO" id="GO:0042802">
    <property type="term" value="F:identical protein binding"/>
    <property type="evidence" value="ECO:0007669"/>
    <property type="project" value="Ensembl"/>
</dbReference>
<dbReference type="GO" id="GO:0000978">
    <property type="term" value="F:RNA polymerase II cis-regulatory region sequence-specific DNA binding"/>
    <property type="evidence" value="ECO:0007669"/>
    <property type="project" value="TreeGrafter"/>
</dbReference>
<dbReference type="GO" id="GO:0043565">
    <property type="term" value="F:sequence-specific DNA binding"/>
    <property type="evidence" value="ECO:0000250"/>
    <property type="project" value="UniProtKB"/>
</dbReference>
<dbReference type="GO" id="GO:0008270">
    <property type="term" value="F:zinc ion binding"/>
    <property type="evidence" value="ECO:0007669"/>
    <property type="project" value="UniProtKB-KW"/>
</dbReference>
<dbReference type="GO" id="GO:0042552">
    <property type="term" value="P:myelination"/>
    <property type="evidence" value="ECO:0000250"/>
    <property type="project" value="UniProtKB"/>
</dbReference>
<dbReference type="GO" id="GO:0045892">
    <property type="term" value="P:negative regulation of DNA-templated transcription"/>
    <property type="evidence" value="ECO:0007669"/>
    <property type="project" value="Ensembl"/>
</dbReference>
<dbReference type="CDD" id="cd07936">
    <property type="entry name" value="SCAN"/>
    <property type="match status" value="1"/>
</dbReference>
<dbReference type="FunFam" id="3.30.160.60:FF:000824">
    <property type="entry name" value="Zinc finger protein 184"/>
    <property type="match status" value="1"/>
</dbReference>
<dbReference type="FunFam" id="3.30.160.60:FF:000358">
    <property type="entry name" value="zinc finger protein 24"/>
    <property type="match status" value="1"/>
</dbReference>
<dbReference type="FunFam" id="3.30.160.60:FF:000632">
    <property type="entry name" value="zinc finger protein 24 isoform X1"/>
    <property type="match status" value="1"/>
</dbReference>
<dbReference type="FunFam" id="1.10.4020.10:FF:000001">
    <property type="entry name" value="zinc finger protein 263 isoform X1"/>
    <property type="match status" value="1"/>
</dbReference>
<dbReference type="FunFam" id="3.30.160.60:FF:000953">
    <property type="entry name" value="Zinc finger protein 691"/>
    <property type="match status" value="1"/>
</dbReference>
<dbReference type="Gene3D" id="3.30.160.60">
    <property type="entry name" value="Classic Zinc Finger"/>
    <property type="match status" value="4"/>
</dbReference>
<dbReference type="Gene3D" id="1.10.4020.10">
    <property type="entry name" value="DNA breaking-rejoining enzymes"/>
    <property type="match status" value="1"/>
</dbReference>
<dbReference type="InterPro" id="IPR003309">
    <property type="entry name" value="SCAN_dom"/>
</dbReference>
<dbReference type="InterPro" id="IPR038269">
    <property type="entry name" value="SCAN_sf"/>
</dbReference>
<dbReference type="InterPro" id="IPR036236">
    <property type="entry name" value="Znf_C2H2_sf"/>
</dbReference>
<dbReference type="InterPro" id="IPR013087">
    <property type="entry name" value="Znf_C2H2_type"/>
</dbReference>
<dbReference type="PANTHER" id="PTHR23235">
    <property type="entry name" value="KRUEPPEL-LIKE TRANSCRIPTION FACTOR"/>
    <property type="match status" value="1"/>
</dbReference>
<dbReference type="PANTHER" id="PTHR23235:SF142">
    <property type="entry name" value="ZINC FINGER PROTEIN 384"/>
    <property type="match status" value="1"/>
</dbReference>
<dbReference type="Pfam" id="PF02023">
    <property type="entry name" value="SCAN"/>
    <property type="match status" value="1"/>
</dbReference>
<dbReference type="Pfam" id="PF00096">
    <property type="entry name" value="zf-C2H2"/>
    <property type="match status" value="4"/>
</dbReference>
<dbReference type="SMART" id="SM00431">
    <property type="entry name" value="SCAN"/>
    <property type="match status" value="1"/>
</dbReference>
<dbReference type="SMART" id="SM00355">
    <property type="entry name" value="ZnF_C2H2"/>
    <property type="match status" value="4"/>
</dbReference>
<dbReference type="SUPFAM" id="SSF57667">
    <property type="entry name" value="beta-beta-alpha zinc fingers"/>
    <property type="match status" value="3"/>
</dbReference>
<dbReference type="SUPFAM" id="SSF47353">
    <property type="entry name" value="Retrovirus capsid dimerization domain-like"/>
    <property type="match status" value="1"/>
</dbReference>
<dbReference type="PROSITE" id="PS50804">
    <property type="entry name" value="SCAN_BOX"/>
    <property type="match status" value="1"/>
</dbReference>
<dbReference type="PROSITE" id="PS00028">
    <property type="entry name" value="ZINC_FINGER_C2H2_1"/>
    <property type="match status" value="4"/>
</dbReference>
<dbReference type="PROSITE" id="PS50157">
    <property type="entry name" value="ZINC_FINGER_C2H2_2"/>
    <property type="match status" value="4"/>
</dbReference>
<proteinExistence type="evidence at transcript level"/>
<reference key="1">
    <citation type="submission" date="2004-11" db="EMBL/GenBank/DDBJ databases">
        <authorList>
            <consortium name="The German cDNA consortium"/>
        </authorList>
    </citation>
    <scope>NUCLEOTIDE SEQUENCE [LARGE SCALE MRNA]</scope>
    <source>
        <tissue>Kidney</tissue>
    </source>
</reference>